<dbReference type="EMBL" id="AL606982">
    <property type="status" value="NOT_ANNOTATED_CDS"/>
    <property type="molecule type" value="Genomic_DNA"/>
</dbReference>
<dbReference type="EMBL" id="AL606988">
    <property type="status" value="NOT_ANNOTATED_CDS"/>
    <property type="molecule type" value="Genomic_DNA"/>
</dbReference>
<dbReference type="EMBL" id="AL691453">
    <property type="status" value="NOT_ANNOTATED_CDS"/>
    <property type="molecule type" value="Genomic_DNA"/>
</dbReference>
<dbReference type="EMBL" id="CU210933">
    <property type="status" value="NOT_ANNOTATED_CDS"/>
    <property type="molecule type" value="Genomic_DNA"/>
</dbReference>
<dbReference type="EMBL" id="CU210934">
    <property type="status" value="NOT_ANNOTATED_CDS"/>
    <property type="molecule type" value="Genomic_DNA"/>
</dbReference>
<dbReference type="EMBL" id="AK122287">
    <property type="protein sequence ID" value="BAC65569.1"/>
    <property type="molecule type" value="Transcribed_RNA"/>
</dbReference>
<dbReference type="CCDS" id="CCDS38979.1"/>
<dbReference type="RefSeq" id="NP_001078961.1">
    <property type="nucleotide sequence ID" value="NM_001085492.1"/>
</dbReference>
<dbReference type="SMR" id="Q80TZ9"/>
<dbReference type="BioGRID" id="213002">
    <property type="interactions" value="5"/>
</dbReference>
<dbReference type="FunCoup" id="Q80TZ9">
    <property type="interactions" value="4012"/>
</dbReference>
<dbReference type="IntAct" id="Q80TZ9">
    <property type="interactions" value="3"/>
</dbReference>
<dbReference type="STRING" id="10090.ENSMUSP00000101307"/>
<dbReference type="GlyGen" id="Q80TZ9">
    <property type="glycosylation" value="8 sites, 2 N-linked glycans (2 sites), 1 O-linked glycan (3 sites)"/>
</dbReference>
<dbReference type="iPTMnet" id="Q80TZ9"/>
<dbReference type="PhosphoSitePlus" id="Q80TZ9"/>
<dbReference type="jPOST" id="Q80TZ9"/>
<dbReference type="PaxDb" id="10090-ENSMUSP00000101307"/>
<dbReference type="PeptideAtlas" id="Q80TZ9"/>
<dbReference type="ProteomicsDB" id="255287"/>
<dbReference type="Pumba" id="Q80TZ9"/>
<dbReference type="Antibodypedia" id="13215">
    <property type="antibodies" value="160 antibodies from 24 providers"/>
</dbReference>
<dbReference type="DNASU" id="68703"/>
<dbReference type="Ensembl" id="ENSMUST00000105682.9">
    <property type="protein sequence ID" value="ENSMUSP00000101307.3"/>
    <property type="gene ID" value="ENSMUSG00000039852.18"/>
</dbReference>
<dbReference type="GeneID" id="68703"/>
<dbReference type="KEGG" id="mmu:68703"/>
<dbReference type="UCSC" id="uc008vxr.1">
    <property type="organism name" value="mouse"/>
</dbReference>
<dbReference type="AGR" id="MGI:2683486"/>
<dbReference type="CTD" id="473"/>
<dbReference type="MGI" id="MGI:2683486">
    <property type="gene designation" value="Rere"/>
</dbReference>
<dbReference type="VEuPathDB" id="HostDB:ENSMUSG00000039852"/>
<dbReference type="eggNOG" id="KOG2133">
    <property type="taxonomic scope" value="Eukaryota"/>
</dbReference>
<dbReference type="GeneTree" id="ENSGT00940000153615"/>
<dbReference type="HOGENOM" id="CLU_005292_1_0_1"/>
<dbReference type="InParanoid" id="Q80TZ9"/>
<dbReference type="OMA" id="MPMPHIK"/>
<dbReference type="OrthoDB" id="6147534at2759"/>
<dbReference type="PhylomeDB" id="Q80TZ9"/>
<dbReference type="TreeFam" id="TF328554"/>
<dbReference type="BioGRID-ORCS" id="68703">
    <property type="hits" value="6 hits in 80 CRISPR screens"/>
</dbReference>
<dbReference type="ChiTaRS" id="Rere">
    <property type="organism name" value="mouse"/>
</dbReference>
<dbReference type="PRO" id="PR:Q80TZ9"/>
<dbReference type="Proteomes" id="UP000000589">
    <property type="component" value="Chromosome 4"/>
</dbReference>
<dbReference type="RNAct" id="Q80TZ9">
    <property type="molecule type" value="protein"/>
</dbReference>
<dbReference type="Bgee" id="ENSMUSG00000039852">
    <property type="expression patterns" value="Expressed in vestibular membrane of cochlear duct and 274 other cell types or tissues"/>
</dbReference>
<dbReference type="ExpressionAtlas" id="Q80TZ9">
    <property type="expression patterns" value="baseline and differential"/>
</dbReference>
<dbReference type="GO" id="GO:0000118">
    <property type="term" value="C:histone deacetylase complex"/>
    <property type="evidence" value="ECO:0000353"/>
    <property type="project" value="MGI"/>
</dbReference>
<dbReference type="GO" id="GO:0005634">
    <property type="term" value="C:nucleus"/>
    <property type="evidence" value="ECO:0000314"/>
    <property type="project" value="MGI"/>
</dbReference>
<dbReference type="GO" id="GO:0016605">
    <property type="term" value="C:PML body"/>
    <property type="evidence" value="ECO:0007669"/>
    <property type="project" value="UniProtKB-SubCell"/>
</dbReference>
<dbReference type="GO" id="GO:0003682">
    <property type="term" value="F:chromatin binding"/>
    <property type="evidence" value="ECO:0007669"/>
    <property type="project" value="InterPro"/>
</dbReference>
<dbReference type="GO" id="GO:0043565">
    <property type="term" value="F:sequence-specific DNA binding"/>
    <property type="evidence" value="ECO:0007669"/>
    <property type="project" value="InterPro"/>
</dbReference>
<dbReference type="GO" id="GO:0003713">
    <property type="term" value="F:transcription coactivator activity"/>
    <property type="evidence" value="ECO:0000314"/>
    <property type="project" value="MGI"/>
</dbReference>
<dbReference type="GO" id="GO:0003714">
    <property type="term" value="F:transcription corepressor activity"/>
    <property type="evidence" value="ECO:0000315"/>
    <property type="project" value="MGI"/>
</dbReference>
<dbReference type="GO" id="GO:0008270">
    <property type="term" value="F:zinc ion binding"/>
    <property type="evidence" value="ECO:0007669"/>
    <property type="project" value="UniProtKB-KW"/>
</dbReference>
<dbReference type="GO" id="GO:0048755">
    <property type="term" value="P:branching morphogenesis of a nerve"/>
    <property type="evidence" value="ECO:0000315"/>
    <property type="project" value="MGI"/>
</dbReference>
<dbReference type="GO" id="GO:0021930">
    <property type="term" value="P:cerebellar granule cell precursor proliferation"/>
    <property type="evidence" value="ECO:0000315"/>
    <property type="project" value="MGI"/>
</dbReference>
<dbReference type="GO" id="GO:0021691">
    <property type="term" value="P:cerebellar Purkinje cell layer maturation"/>
    <property type="evidence" value="ECO:0000315"/>
    <property type="project" value="MGI"/>
</dbReference>
<dbReference type="GO" id="GO:0021549">
    <property type="term" value="P:cerebellum development"/>
    <property type="evidence" value="ECO:0000315"/>
    <property type="project" value="MGI"/>
</dbReference>
<dbReference type="GO" id="GO:0006338">
    <property type="term" value="P:chromatin remodeling"/>
    <property type="evidence" value="ECO:0000353"/>
    <property type="project" value="MGI"/>
</dbReference>
<dbReference type="GO" id="GO:0048813">
    <property type="term" value="P:dendrite morphogenesis"/>
    <property type="evidence" value="ECO:0000315"/>
    <property type="project" value="MGI"/>
</dbReference>
<dbReference type="GO" id="GO:0021942">
    <property type="term" value="P:radial glia guided migration of Purkinje cell"/>
    <property type="evidence" value="ECO:0000315"/>
    <property type="project" value="MGI"/>
</dbReference>
<dbReference type="CDD" id="cd04709">
    <property type="entry name" value="BAH_MTA"/>
    <property type="match status" value="1"/>
</dbReference>
<dbReference type="CDD" id="cd11661">
    <property type="entry name" value="SANT_MTA3_like"/>
    <property type="match status" value="1"/>
</dbReference>
<dbReference type="CDD" id="cd00202">
    <property type="entry name" value="ZnF_GATA"/>
    <property type="match status" value="1"/>
</dbReference>
<dbReference type="FunFam" id="1.10.10.60:FF:000052">
    <property type="entry name" value="Arginine-glutamic acid dipeptide (RE) repeats"/>
    <property type="match status" value="1"/>
</dbReference>
<dbReference type="FunFam" id="4.10.1240.50:FF:000003">
    <property type="entry name" value="Arginine-glutamic acid dipeptide (RE) repeats a"/>
    <property type="match status" value="1"/>
</dbReference>
<dbReference type="Gene3D" id="2.30.30.490">
    <property type="match status" value="1"/>
</dbReference>
<dbReference type="Gene3D" id="4.10.1240.50">
    <property type="match status" value="1"/>
</dbReference>
<dbReference type="Gene3D" id="1.10.10.60">
    <property type="entry name" value="Homeodomain-like"/>
    <property type="match status" value="1"/>
</dbReference>
<dbReference type="InterPro" id="IPR002951">
    <property type="entry name" value="Atrophin-like"/>
</dbReference>
<dbReference type="InterPro" id="IPR001025">
    <property type="entry name" value="BAH_dom"/>
</dbReference>
<dbReference type="InterPro" id="IPR043151">
    <property type="entry name" value="BAH_sf"/>
</dbReference>
<dbReference type="InterPro" id="IPR000949">
    <property type="entry name" value="ELM2_dom"/>
</dbReference>
<dbReference type="InterPro" id="IPR009057">
    <property type="entry name" value="Homeodomain-like_sf"/>
</dbReference>
<dbReference type="InterPro" id="IPR001005">
    <property type="entry name" value="SANT/Myb"/>
</dbReference>
<dbReference type="InterPro" id="IPR017884">
    <property type="entry name" value="SANT_dom"/>
</dbReference>
<dbReference type="InterPro" id="IPR000679">
    <property type="entry name" value="Znf_GATA"/>
</dbReference>
<dbReference type="PANTHER" id="PTHR13859:SF12">
    <property type="entry name" value="ARGININE-GLUTAMIC ACID DIPEPTIDE REPEATS PROTEIN"/>
    <property type="match status" value="1"/>
</dbReference>
<dbReference type="PANTHER" id="PTHR13859">
    <property type="entry name" value="ATROPHIN-RELATED"/>
    <property type="match status" value="1"/>
</dbReference>
<dbReference type="Pfam" id="PF03154">
    <property type="entry name" value="Atrophin-1"/>
    <property type="match status" value="1"/>
</dbReference>
<dbReference type="Pfam" id="PF01426">
    <property type="entry name" value="BAH"/>
    <property type="match status" value="1"/>
</dbReference>
<dbReference type="Pfam" id="PF01448">
    <property type="entry name" value="ELM2"/>
    <property type="match status" value="1"/>
</dbReference>
<dbReference type="Pfam" id="PF00320">
    <property type="entry name" value="GATA"/>
    <property type="match status" value="1"/>
</dbReference>
<dbReference type="SMART" id="SM00439">
    <property type="entry name" value="BAH"/>
    <property type="match status" value="1"/>
</dbReference>
<dbReference type="SMART" id="SM01189">
    <property type="entry name" value="ELM2"/>
    <property type="match status" value="1"/>
</dbReference>
<dbReference type="SMART" id="SM00717">
    <property type="entry name" value="SANT"/>
    <property type="match status" value="1"/>
</dbReference>
<dbReference type="SMART" id="SM00401">
    <property type="entry name" value="ZnF_GATA"/>
    <property type="match status" value="1"/>
</dbReference>
<dbReference type="SUPFAM" id="SSF57716">
    <property type="entry name" value="Glucocorticoid receptor-like (DNA-binding domain)"/>
    <property type="match status" value="1"/>
</dbReference>
<dbReference type="SUPFAM" id="SSF46689">
    <property type="entry name" value="Homeodomain-like"/>
    <property type="match status" value="1"/>
</dbReference>
<dbReference type="PROSITE" id="PS51038">
    <property type="entry name" value="BAH"/>
    <property type="match status" value="1"/>
</dbReference>
<dbReference type="PROSITE" id="PS51156">
    <property type="entry name" value="ELM2"/>
    <property type="match status" value="1"/>
</dbReference>
<dbReference type="PROSITE" id="PS51293">
    <property type="entry name" value="SANT"/>
    <property type="match status" value="1"/>
</dbReference>
<name>RERE_MOUSE</name>
<sequence>MTADKDKDKDKEKDRDRDRDRERDKRDKARESENARPRRSCTLEGGAKNYAESDHSEDEDNDNNSATTEESNKKSRKKPPKKKSRYERTDTGEITSYITEDDVVYRPGDCVYIESRRPNTPYFICSIQDFKLVHSSQACCRSPAPAFCDPPACSLPVAPQPPQHLSEAGRGPGGSKRDHLLMNVKWYYRQSEVPDSVYQHLVQDRHNENDSGRELVITDPVIKNRELFISDYVDTYHAAALRGKCNISHFSDIFAAREFKARVDSFFYILGYNPETRRLNSTQGEIRVGPSHQAKLPDLQPFPSPDGDTVTQHEELVWMPGVSDCDLLMYLRAARSMAAFAGMCDGGSTEDGCVAASRDDTTLNALNTLHESSYDAGKALQRLVKKPVPKLIEKCWTEDEVKRFVKGLRQYGKNFFRIRKELLPSKETGELITFYYYWKKTPEAASSRAHRRHRRQAVFRRIKTRTASTPVNTPSRPPSSEFLDLSSASEDDFDSEDSEQELKGYACRHCFTTTSKDWHHGGRENILLCTDCRIHFKKYGELPPIEKPVDPPPFMFKPVKEEDDGLSGKHSMRTRRSRGSMSTLRSGRKKQPTSPDGRASPINEDIRSSGRNSPSAASTSSNDSKAETVKKSAKKVKEEAASPLKSTKRQREKVASDTEDTDRITSKKTKTQEISRPNSPSEGEGESSDSRSVNDEGSSDPKDIDQDNRSTSPSIPSPQDNESDSDSSAQQQMLQAQPPALQAPSGAASAPSTAPPGTPQLPTQGPTPSATAVPPQGSPATSQPPNQTQSTVAPAAHTHIQQAPTLHPPRLPSPHPPLQPMTAPPSQSSAQPHPQPSLHSQGPPGPHSLQTGPLLQHPGPPQPFGLPSQPSQGQGPLGPSPAAAHPHSTIQLPASQSALQPQQPPREQPLPPAPLAMPHIKPPPTTPIPQLPAPQAHKHPPHLSGPSPFSLNANLPPPPALKPLSSLSTHHPPSAHPPPLQLMPQSQPLPSSPAQPPGLTQSQSLPPPAASHPTTGLHQVPSQSPFPQHPFVPGGPPPITPPSCPPTSTPPAGPSSSSQPPCSAAVSSGGSVPGAPSCPLPAVQIKEEALDEAEEPESPPPPPRSPSPEPTVVDTPSHASQSARFYKHLDRGYNSCARTDLYFMPLAGSKLAKKREEAIEKAKREAEQKAREEREREKEKEKEREREREREREAERAAKASSSAHEGRLSDPQLSGPGHMRPSFEPPPTTIAAVPPYIGPDTPALRTLSEYARPHVMSPTNRNHPFYMPLNPTDPLLAYHMPGLYNVDPTIRERELREREIREREIRERELRERMKPGFEVKPPELDPLHPATNPMEHFARHSALTIPPAAGPHPFASFHPGLNPLERERLALAGPQLRPEMSYPDRLAAERIHAERMASLTSDPLARLQMFNVTPHHHQHSHIHSHLHLHQQDPLHQGSAGPVHPLVDPLTAGPHLARFPYPPGTLPNPLLGQPPHEHEMLRHPVFGTPYPRDLPGAIPPPMSAAHQLQAMHAQSAELQRLAMEQQWLHGHPHMHGGHLPSQEDYYSRLKKEGDKQL</sequence>
<accession>Q80TZ9</accession>
<accession>A2A7T4</accession>
<organism>
    <name type="scientific">Mus musculus</name>
    <name type="common">Mouse</name>
    <dbReference type="NCBI Taxonomy" id="10090"/>
    <lineage>
        <taxon>Eukaryota</taxon>
        <taxon>Metazoa</taxon>
        <taxon>Chordata</taxon>
        <taxon>Craniata</taxon>
        <taxon>Vertebrata</taxon>
        <taxon>Euteleostomi</taxon>
        <taxon>Mammalia</taxon>
        <taxon>Eutheria</taxon>
        <taxon>Euarchontoglires</taxon>
        <taxon>Glires</taxon>
        <taxon>Rodentia</taxon>
        <taxon>Myomorpha</taxon>
        <taxon>Muroidea</taxon>
        <taxon>Muridae</taxon>
        <taxon>Murinae</taxon>
        <taxon>Mus</taxon>
        <taxon>Mus</taxon>
    </lineage>
</organism>
<reference key="1">
    <citation type="journal article" date="2009" name="PLoS Biol.">
        <title>Lineage-specific biology revealed by a finished genome assembly of the mouse.</title>
        <authorList>
            <person name="Church D.M."/>
            <person name="Goodstadt L."/>
            <person name="Hillier L.W."/>
            <person name="Zody M.C."/>
            <person name="Goldstein S."/>
            <person name="She X."/>
            <person name="Bult C.J."/>
            <person name="Agarwala R."/>
            <person name="Cherry J.L."/>
            <person name="DiCuccio M."/>
            <person name="Hlavina W."/>
            <person name="Kapustin Y."/>
            <person name="Meric P."/>
            <person name="Maglott D."/>
            <person name="Birtle Z."/>
            <person name="Marques A.C."/>
            <person name="Graves T."/>
            <person name="Zhou S."/>
            <person name="Teague B."/>
            <person name="Potamousis K."/>
            <person name="Churas C."/>
            <person name="Place M."/>
            <person name="Herschleb J."/>
            <person name="Runnheim R."/>
            <person name="Forrest D."/>
            <person name="Amos-Landgraf J."/>
            <person name="Schwartz D.C."/>
            <person name="Cheng Z."/>
            <person name="Lindblad-Toh K."/>
            <person name="Eichler E.E."/>
            <person name="Ponting C.P."/>
        </authorList>
    </citation>
    <scope>NUCLEOTIDE SEQUENCE [LARGE SCALE GENOMIC DNA]</scope>
    <source>
        <strain>C57BL/6J</strain>
    </source>
</reference>
<reference key="2">
    <citation type="journal article" date="2003" name="DNA Res.">
        <title>Prediction of the coding sequences of mouse homologues of KIAA gene: II. The complete nucleotide sequences of 400 mouse KIAA-homologous cDNAs identified by screening of terminal sequences of cDNA clones randomly sampled from size-fractionated libraries.</title>
        <authorList>
            <person name="Okazaki N."/>
            <person name="Kikuno R."/>
            <person name="Ohara R."/>
            <person name="Inamoto S."/>
            <person name="Aizawa H."/>
            <person name="Yuasa S."/>
            <person name="Nakajima D."/>
            <person name="Nagase T."/>
            <person name="Ohara O."/>
            <person name="Koga H."/>
        </authorList>
    </citation>
    <scope>NUCLEOTIDE SEQUENCE [LARGE SCALE MRNA] OF 673-1558</scope>
    <source>
        <tissue>Brain</tissue>
    </source>
</reference>
<reference key="3">
    <citation type="journal article" date="2004" name="Development">
        <title>Atrophin 2 recruits histone deacetylase and is required for the function of multiple signaling centers during mouse embryogenesis.</title>
        <authorList>
            <person name="Zoltewicz J.S."/>
            <person name="Stewart N.J."/>
            <person name="Leung R."/>
            <person name="Peterson A.S."/>
        </authorList>
    </citation>
    <scope>FUNCTION</scope>
    <scope>INTERACTION WITH ATN1 AND HDAC1</scope>
    <scope>DEVELOPMENTAL STAGE</scope>
    <scope>DISRUPTION PHENOTYPE</scope>
</reference>
<reference key="4">
    <citation type="journal article" date="2007" name="Proc. Natl. Acad. Sci. U.S.A.">
        <title>Large-scale phosphorylation analysis of mouse liver.</title>
        <authorList>
            <person name="Villen J."/>
            <person name="Beausoleil S.A."/>
            <person name="Gerber S.A."/>
            <person name="Gygi S.P."/>
        </authorList>
    </citation>
    <scope>PHOSPHORYLATION [LARGE SCALE ANALYSIS] AT SER-675 AND SER-679</scope>
    <scope>IDENTIFICATION BY MASS SPECTROMETRY [LARGE SCALE ANALYSIS]</scope>
    <source>
        <tissue>Liver</tissue>
    </source>
</reference>
<reference key="5">
    <citation type="journal article" date="2010" name="Cell">
        <title>A tissue-specific atlas of mouse protein phosphorylation and expression.</title>
        <authorList>
            <person name="Huttlin E.L."/>
            <person name="Jedrychowski M.P."/>
            <person name="Elias J.E."/>
            <person name="Goswami T."/>
            <person name="Rad R."/>
            <person name="Beausoleil S.A."/>
            <person name="Villen J."/>
            <person name="Haas W."/>
            <person name="Sowa M.E."/>
            <person name="Gygi S.P."/>
        </authorList>
    </citation>
    <scope>PHOSPHORYLATION [LARGE SCALE ANALYSIS] AT SER-53; SER-56; SER-142; THR-593; SER-594; SER-600; SER-675; SER-679; SER-1098; SER-1105 AND SER-1107</scope>
    <scope>IDENTIFICATION BY MASS SPECTROMETRY [LARGE SCALE ANALYSIS]</scope>
    <source>
        <tissue>Brain</tissue>
        <tissue>Brown adipose tissue</tissue>
        <tissue>Heart</tissue>
        <tissue>Kidney</tissue>
        <tissue>Lung</tissue>
        <tissue>Spleen</tissue>
        <tissue>Testis</tissue>
    </source>
</reference>
<reference key="6">
    <citation type="journal article" date="2013" name="Mol. Cell">
        <title>SIRT5-mediated lysine desuccinylation impacts diverse metabolic pathways.</title>
        <authorList>
            <person name="Park J."/>
            <person name="Chen Y."/>
            <person name="Tishkoff D.X."/>
            <person name="Peng C."/>
            <person name="Tan M."/>
            <person name="Dai L."/>
            <person name="Xie Z."/>
            <person name="Zhang Y."/>
            <person name="Zwaans B.M."/>
            <person name="Skinner M.E."/>
            <person name="Lombard D.B."/>
            <person name="Zhao Y."/>
        </authorList>
    </citation>
    <scope>ACETYLATION [LARGE SCALE ANALYSIS] AT LYS-1150</scope>
    <scope>IDENTIFICATION BY MASS SPECTROMETRY [LARGE SCALE ANALYSIS]</scope>
    <source>
        <tissue>Embryonic fibroblast</tissue>
    </source>
</reference>
<proteinExistence type="evidence at protein level"/>
<feature type="chain" id="PRO_0000083505" description="Arginine-glutamic acid dipeptide repeats protein">
    <location>
        <begin position="1"/>
        <end position="1558"/>
    </location>
</feature>
<feature type="domain" description="BAH" evidence="4">
    <location>
        <begin position="103"/>
        <end position="283"/>
    </location>
</feature>
<feature type="domain" description="ELM2" evidence="5">
    <location>
        <begin position="284"/>
        <end position="387"/>
    </location>
</feature>
<feature type="domain" description="SANT" evidence="6">
    <location>
        <begin position="391"/>
        <end position="443"/>
    </location>
</feature>
<feature type="zinc finger region" description="GATA-type">
    <location>
        <begin position="507"/>
        <end position="532"/>
    </location>
</feature>
<feature type="region of interest" description="Disordered" evidence="7">
    <location>
        <begin position="1"/>
        <end position="90"/>
    </location>
</feature>
<feature type="region of interest" description="Disordered" evidence="7">
    <location>
        <begin position="464"/>
        <end position="495"/>
    </location>
</feature>
<feature type="region of interest" description="Disordered" evidence="7">
    <location>
        <begin position="542"/>
        <end position="1125"/>
    </location>
</feature>
<feature type="region of interest" description="Disordered" evidence="7">
    <location>
        <begin position="1154"/>
        <end position="1238"/>
    </location>
</feature>
<feature type="coiled-coil region" evidence="3">
    <location>
        <begin position="1148"/>
        <end position="1203"/>
    </location>
</feature>
<feature type="compositionally biased region" description="Basic and acidic residues" evidence="7">
    <location>
        <begin position="1"/>
        <end position="36"/>
    </location>
</feature>
<feature type="compositionally biased region" description="Basic residues" evidence="7">
    <location>
        <begin position="74"/>
        <end position="85"/>
    </location>
</feature>
<feature type="compositionally biased region" description="Polar residues" evidence="7">
    <location>
        <begin position="465"/>
        <end position="474"/>
    </location>
</feature>
<feature type="compositionally biased region" description="Low complexity" evidence="7">
    <location>
        <begin position="479"/>
        <end position="488"/>
    </location>
</feature>
<feature type="compositionally biased region" description="Low complexity" evidence="7">
    <location>
        <begin position="609"/>
        <end position="623"/>
    </location>
</feature>
<feature type="compositionally biased region" description="Basic and acidic residues" evidence="7">
    <location>
        <begin position="624"/>
        <end position="640"/>
    </location>
</feature>
<feature type="compositionally biased region" description="Basic and acidic residues" evidence="7">
    <location>
        <begin position="652"/>
        <end position="673"/>
    </location>
</feature>
<feature type="compositionally biased region" description="Basic and acidic residues" evidence="7">
    <location>
        <begin position="688"/>
        <end position="708"/>
    </location>
</feature>
<feature type="compositionally biased region" description="Polar residues" evidence="7">
    <location>
        <begin position="709"/>
        <end position="720"/>
    </location>
</feature>
<feature type="compositionally biased region" description="Low complexity" evidence="7">
    <location>
        <begin position="726"/>
        <end position="752"/>
    </location>
</feature>
<feature type="compositionally biased region" description="Polar residues" evidence="7">
    <location>
        <begin position="778"/>
        <end position="792"/>
    </location>
</feature>
<feature type="compositionally biased region" description="Pro residues" evidence="7">
    <location>
        <begin position="806"/>
        <end position="823"/>
    </location>
</feature>
<feature type="compositionally biased region" description="Low complexity" evidence="7">
    <location>
        <begin position="824"/>
        <end position="857"/>
    </location>
</feature>
<feature type="compositionally biased region" description="Low complexity" evidence="7">
    <location>
        <begin position="865"/>
        <end position="874"/>
    </location>
</feature>
<feature type="compositionally biased region" description="Low complexity" evidence="7">
    <location>
        <begin position="891"/>
        <end position="901"/>
    </location>
</feature>
<feature type="compositionally biased region" description="Pro residues" evidence="7">
    <location>
        <begin position="902"/>
        <end position="932"/>
    </location>
</feature>
<feature type="compositionally biased region" description="Low complexity" evidence="7">
    <location>
        <begin position="962"/>
        <end position="972"/>
    </location>
</feature>
<feature type="compositionally biased region" description="Polar residues" evidence="7">
    <location>
        <begin position="1012"/>
        <end position="1023"/>
    </location>
</feature>
<feature type="compositionally biased region" description="Pro residues" evidence="7">
    <location>
        <begin position="1027"/>
        <end position="1053"/>
    </location>
</feature>
<feature type="compositionally biased region" description="Low complexity" evidence="7">
    <location>
        <begin position="1054"/>
        <end position="1077"/>
    </location>
</feature>
<feature type="compositionally biased region" description="Pro residues" evidence="7">
    <location>
        <begin position="1098"/>
        <end position="1109"/>
    </location>
</feature>
<feature type="compositionally biased region" description="Basic and acidic residues" evidence="7">
    <location>
        <begin position="1154"/>
        <end position="1198"/>
    </location>
</feature>
<feature type="modified residue" description="Phosphoserine" evidence="11">
    <location>
        <position position="53"/>
    </location>
</feature>
<feature type="modified residue" description="Phosphoserine" evidence="11">
    <location>
        <position position="56"/>
    </location>
</feature>
<feature type="modified residue" description="Phosphothreonine" evidence="2">
    <location>
        <position position="120"/>
    </location>
</feature>
<feature type="modified residue" description="Phosphoserine" evidence="11">
    <location>
        <position position="142"/>
    </location>
</feature>
<feature type="modified residue" description="Phosphoserine" evidence="2">
    <location>
        <position position="304"/>
    </location>
</feature>
<feature type="modified residue" description="Phosphothreonine" evidence="11">
    <location>
        <position position="593"/>
    </location>
</feature>
<feature type="modified residue" description="Phosphoserine" evidence="11">
    <location>
        <position position="594"/>
    </location>
</feature>
<feature type="modified residue" description="Phosphoserine" evidence="11">
    <location>
        <position position="600"/>
    </location>
</feature>
<feature type="modified residue" description="Phosphoserine" evidence="2">
    <location>
        <position position="613"/>
    </location>
</feature>
<feature type="modified residue" description="Phosphoserine" evidence="2">
    <location>
        <position position="642"/>
    </location>
</feature>
<feature type="modified residue" description="Phosphoserine" evidence="2">
    <location>
        <position position="656"/>
    </location>
</feature>
<feature type="modified residue" description="Phosphoserine" evidence="10 11">
    <location>
        <position position="675"/>
    </location>
</feature>
<feature type="modified residue" description="Phosphoserine" evidence="10 11">
    <location>
        <position position="679"/>
    </location>
</feature>
<feature type="modified residue" description="Phosphoserine" evidence="11">
    <location>
        <position position="1098"/>
    </location>
</feature>
<feature type="modified residue" description="Phosphoserine" evidence="11">
    <location>
        <position position="1105"/>
    </location>
</feature>
<feature type="modified residue" description="Phosphoserine" evidence="11">
    <location>
        <position position="1107"/>
    </location>
</feature>
<feature type="modified residue" description="Phosphothreonine" evidence="2">
    <location>
        <position position="1111"/>
    </location>
</feature>
<feature type="modified residue" description="N6-acetyllysine" evidence="12">
    <location>
        <position position="1150"/>
    </location>
</feature>
<feature type="modified residue" description="Phosphotyrosine" evidence="2">
    <location>
        <position position="1251"/>
    </location>
</feature>
<feature type="modified residue" description="Phosphoserine" evidence="2">
    <location>
        <position position="1258"/>
    </location>
</feature>
<feature type="cross-link" description="Glycyl lysine isopeptide (Lys-Gly) (interchain with G-Cter in SUMO2)" evidence="2">
    <location>
        <position position="560"/>
    </location>
</feature>
<feature type="cross-link" description="Glycyl lysine isopeptide (Lys-Gly) (interchain with G-Cter in SUMO2)" evidence="2">
    <location>
        <position position="637"/>
    </location>
</feature>
<feature type="sequence conflict" description="In Ref. 2; BAC65569." evidence="9" ref="2">
    <original>S</original>
    <variation>G</variation>
    <location>
        <position position="840"/>
    </location>
</feature>
<feature type="sequence conflict" description="In Ref. 2; BAC65569." evidence="9" ref="2">
    <location>
        <begin position="1236"/>
        <end position="1239"/>
    </location>
</feature>
<protein>
    <recommendedName>
        <fullName>Arginine-glutamic acid dipeptide repeats protein</fullName>
    </recommendedName>
    <alternativeName>
        <fullName>Atrophin-2</fullName>
    </alternativeName>
</protein>
<keyword id="KW-0007">Acetylation</keyword>
<keyword id="KW-0175">Coiled coil</keyword>
<keyword id="KW-0217">Developmental protein</keyword>
<keyword id="KW-1017">Isopeptide bond</keyword>
<keyword id="KW-0479">Metal-binding</keyword>
<keyword id="KW-0539">Nucleus</keyword>
<keyword id="KW-0597">Phosphoprotein</keyword>
<keyword id="KW-1185">Reference proteome</keyword>
<keyword id="KW-0678">Repressor</keyword>
<keyword id="KW-0804">Transcription</keyword>
<keyword id="KW-0805">Transcription regulation</keyword>
<keyword id="KW-0832">Ubl conjugation</keyword>
<keyword id="KW-0862">Zinc</keyword>
<keyword id="KW-0863">Zinc-finger</keyword>
<evidence type="ECO:0000250" key="1"/>
<evidence type="ECO:0000250" key="2">
    <source>
        <dbReference type="UniProtKB" id="Q9P2R6"/>
    </source>
</evidence>
<evidence type="ECO:0000255" key="3"/>
<evidence type="ECO:0000255" key="4">
    <source>
        <dbReference type="PROSITE-ProRule" id="PRU00370"/>
    </source>
</evidence>
<evidence type="ECO:0000255" key="5">
    <source>
        <dbReference type="PROSITE-ProRule" id="PRU00512"/>
    </source>
</evidence>
<evidence type="ECO:0000255" key="6">
    <source>
        <dbReference type="PROSITE-ProRule" id="PRU00624"/>
    </source>
</evidence>
<evidence type="ECO:0000256" key="7">
    <source>
        <dbReference type="SAM" id="MobiDB-lite"/>
    </source>
</evidence>
<evidence type="ECO:0000269" key="8">
    <source>
    </source>
</evidence>
<evidence type="ECO:0000305" key="9"/>
<evidence type="ECO:0007744" key="10">
    <source>
    </source>
</evidence>
<evidence type="ECO:0007744" key="11">
    <source>
    </source>
</evidence>
<evidence type="ECO:0007744" key="12">
    <source>
    </source>
</evidence>
<comment type="function">
    <text evidence="8">Plays a role as a transcriptional repressor during development. May play a role in the control of cell survival.</text>
</comment>
<comment type="subunit">
    <text evidence="1">Interacts with HDAC1 and ATN1. Interaction with ATN1 is improved when the poly-Gln region of ATN1 is extended. Interacts with FAT1 (By similarity).</text>
</comment>
<comment type="subcellular location">
    <subcellularLocation>
        <location evidence="1">Nucleus</location>
        <location evidence="1">PML body</location>
    </subcellularLocation>
    <text evidence="1">Localized in nuclear bodies of variables size. Colocalized with PML and BAX in nuclear PODs (By similarity).</text>
</comment>
<comment type="developmental stage">
    <text evidence="8">At 8.25 dpc expression is strongly elevated in the anterior midline. At 8.5 dpc expression is elevated throughout the anteroposterior extent of the notochord and is down-regulated in the heart. At 8.75 dpc expression is increased in the ventral brain. At 9.5 dpc strong expression appears besides the notochord including the apical ectodermal ridge (AER), the isthmus and the ventral diencephalon. At 10.5 dpc expression increases in the notochord, the AER and spinal and brain neurons.</text>
</comment>
<comment type="domain">
    <text evidence="1">The interaction with ATN1 is mediated by the coiled domain.</text>
</comment>
<comment type="disruption phenotype">
    <text evidence="8">Mice embryos exhibit a variety of patterning defects that first appear at 8.0 dpc. Defects include a specific failure in ventralization of the anterior neural plate, loss of heart looping and irregular partitioning of somites. In mutant embryos, Shh expression fails to initiate along the anterior midline at 8.0 dpc, and Fgf8 is delocalized from the anterior neural ridge at 8.5 dpc.</text>
</comment>
<gene>
    <name type="primary">Rere</name>
    <name type="synonym">Atr2</name>
    <name type="synonym">Kiaa0458</name>
</gene>